<name>MUTL_STRP2</name>
<keyword id="KW-0227">DNA damage</keyword>
<keyword id="KW-0234">DNA repair</keyword>
<keyword id="KW-1185">Reference proteome</keyword>
<dbReference type="EMBL" id="CP000410">
    <property type="protein sequence ID" value="ABJ54692.1"/>
    <property type="molecule type" value="Genomic_DNA"/>
</dbReference>
<dbReference type="RefSeq" id="WP_000018169.1">
    <property type="nucleotide sequence ID" value="NZ_JAMLJR010000002.1"/>
</dbReference>
<dbReference type="SMR" id="Q04MR4"/>
<dbReference type="PaxDb" id="373153-SPD_0165"/>
<dbReference type="KEGG" id="spd:SPD_0165"/>
<dbReference type="eggNOG" id="COG0323">
    <property type="taxonomic scope" value="Bacteria"/>
</dbReference>
<dbReference type="HOGENOM" id="CLU_004131_4_1_9"/>
<dbReference type="BioCyc" id="SPNE373153:G1G6V-184-MONOMER"/>
<dbReference type="Proteomes" id="UP000001452">
    <property type="component" value="Chromosome"/>
</dbReference>
<dbReference type="GO" id="GO:0032300">
    <property type="term" value="C:mismatch repair complex"/>
    <property type="evidence" value="ECO:0007669"/>
    <property type="project" value="InterPro"/>
</dbReference>
<dbReference type="GO" id="GO:0005524">
    <property type="term" value="F:ATP binding"/>
    <property type="evidence" value="ECO:0007669"/>
    <property type="project" value="InterPro"/>
</dbReference>
<dbReference type="GO" id="GO:0016887">
    <property type="term" value="F:ATP hydrolysis activity"/>
    <property type="evidence" value="ECO:0007669"/>
    <property type="project" value="InterPro"/>
</dbReference>
<dbReference type="GO" id="GO:0140664">
    <property type="term" value="F:ATP-dependent DNA damage sensor activity"/>
    <property type="evidence" value="ECO:0007669"/>
    <property type="project" value="InterPro"/>
</dbReference>
<dbReference type="GO" id="GO:0030983">
    <property type="term" value="F:mismatched DNA binding"/>
    <property type="evidence" value="ECO:0007669"/>
    <property type="project" value="InterPro"/>
</dbReference>
<dbReference type="GO" id="GO:0006298">
    <property type="term" value="P:mismatch repair"/>
    <property type="evidence" value="ECO:0007669"/>
    <property type="project" value="UniProtKB-UniRule"/>
</dbReference>
<dbReference type="CDD" id="cd16926">
    <property type="entry name" value="HATPase_MutL-MLH-PMS-like"/>
    <property type="match status" value="1"/>
</dbReference>
<dbReference type="CDD" id="cd00782">
    <property type="entry name" value="MutL_Trans"/>
    <property type="match status" value="1"/>
</dbReference>
<dbReference type="FunFam" id="3.30.1370.100:FF:000004">
    <property type="entry name" value="DNA mismatch repair endonuclease MutL"/>
    <property type="match status" value="1"/>
</dbReference>
<dbReference type="FunFam" id="3.30.230.10:FF:000036">
    <property type="entry name" value="DNA mismatch repair endonuclease MutL"/>
    <property type="match status" value="1"/>
</dbReference>
<dbReference type="FunFam" id="3.30.565.10:FF:000003">
    <property type="entry name" value="DNA mismatch repair endonuclease MutL"/>
    <property type="match status" value="1"/>
</dbReference>
<dbReference type="Gene3D" id="3.30.230.10">
    <property type="match status" value="1"/>
</dbReference>
<dbReference type="Gene3D" id="3.30.565.10">
    <property type="entry name" value="Histidine kinase-like ATPase, C-terminal domain"/>
    <property type="match status" value="1"/>
</dbReference>
<dbReference type="Gene3D" id="3.30.1540.20">
    <property type="entry name" value="MutL, C-terminal domain, dimerisation subdomain"/>
    <property type="match status" value="1"/>
</dbReference>
<dbReference type="Gene3D" id="3.30.1370.100">
    <property type="entry name" value="MutL, C-terminal domain, regulatory subdomain"/>
    <property type="match status" value="1"/>
</dbReference>
<dbReference type="HAMAP" id="MF_00149">
    <property type="entry name" value="DNA_mis_repair"/>
    <property type="match status" value="1"/>
</dbReference>
<dbReference type="InterPro" id="IPR014762">
    <property type="entry name" value="DNA_mismatch_repair_CS"/>
</dbReference>
<dbReference type="InterPro" id="IPR020667">
    <property type="entry name" value="DNA_mismatch_repair_MutL"/>
</dbReference>
<dbReference type="InterPro" id="IPR013507">
    <property type="entry name" value="DNA_mismatch_S5_2-like"/>
</dbReference>
<dbReference type="InterPro" id="IPR036890">
    <property type="entry name" value="HATPase_C_sf"/>
</dbReference>
<dbReference type="InterPro" id="IPR002099">
    <property type="entry name" value="MutL/Mlh/PMS"/>
</dbReference>
<dbReference type="InterPro" id="IPR038973">
    <property type="entry name" value="MutL/Mlh/Pms-like"/>
</dbReference>
<dbReference type="InterPro" id="IPR014790">
    <property type="entry name" value="MutL_C"/>
</dbReference>
<dbReference type="InterPro" id="IPR042120">
    <property type="entry name" value="MutL_C_dimsub"/>
</dbReference>
<dbReference type="InterPro" id="IPR042121">
    <property type="entry name" value="MutL_C_regsub"/>
</dbReference>
<dbReference type="InterPro" id="IPR037198">
    <property type="entry name" value="MutL_C_sf"/>
</dbReference>
<dbReference type="InterPro" id="IPR020568">
    <property type="entry name" value="Ribosomal_Su5_D2-typ_SF"/>
</dbReference>
<dbReference type="InterPro" id="IPR014721">
    <property type="entry name" value="Ribsml_uS5_D2-typ_fold_subgr"/>
</dbReference>
<dbReference type="NCBIfam" id="TIGR00585">
    <property type="entry name" value="mutl"/>
    <property type="match status" value="1"/>
</dbReference>
<dbReference type="NCBIfam" id="NF000950">
    <property type="entry name" value="PRK00095.1-3"/>
    <property type="match status" value="1"/>
</dbReference>
<dbReference type="PANTHER" id="PTHR10073">
    <property type="entry name" value="DNA MISMATCH REPAIR PROTEIN MLH, PMS, MUTL"/>
    <property type="match status" value="1"/>
</dbReference>
<dbReference type="PANTHER" id="PTHR10073:SF12">
    <property type="entry name" value="DNA MISMATCH REPAIR PROTEIN MLH1"/>
    <property type="match status" value="1"/>
</dbReference>
<dbReference type="Pfam" id="PF01119">
    <property type="entry name" value="DNA_mis_repair"/>
    <property type="match status" value="1"/>
</dbReference>
<dbReference type="Pfam" id="PF13589">
    <property type="entry name" value="HATPase_c_3"/>
    <property type="match status" value="1"/>
</dbReference>
<dbReference type="Pfam" id="PF08676">
    <property type="entry name" value="MutL_C"/>
    <property type="match status" value="1"/>
</dbReference>
<dbReference type="SMART" id="SM01340">
    <property type="entry name" value="DNA_mis_repair"/>
    <property type="match status" value="1"/>
</dbReference>
<dbReference type="SMART" id="SM00853">
    <property type="entry name" value="MutL_C"/>
    <property type="match status" value="1"/>
</dbReference>
<dbReference type="SUPFAM" id="SSF55874">
    <property type="entry name" value="ATPase domain of HSP90 chaperone/DNA topoisomerase II/histidine kinase"/>
    <property type="match status" value="1"/>
</dbReference>
<dbReference type="SUPFAM" id="SSF118116">
    <property type="entry name" value="DNA mismatch repair protein MutL"/>
    <property type="match status" value="1"/>
</dbReference>
<dbReference type="SUPFAM" id="SSF54211">
    <property type="entry name" value="Ribosomal protein S5 domain 2-like"/>
    <property type="match status" value="1"/>
</dbReference>
<dbReference type="PROSITE" id="PS00058">
    <property type="entry name" value="DNA_MISMATCH_REPAIR_1"/>
    <property type="match status" value="1"/>
</dbReference>
<gene>
    <name evidence="1" type="primary">mutL</name>
    <name type="ordered locus">SPD_0165</name>
</gene>
<reference key="1">
    <citation type="journal article" date="2007" name="J. Bacteriol.">
        <title>Genome sequence of Avery's virulent serotype 2 strain D39 of Streptococcus pneumoniae and comparison with that of unencapsulated laboratory strain R6.</title>
        <authorList>
            <person name="Lanie J.A."/>
            <person name="Ng W.-L."/>
            <person name="Kazmierczak K.M."/>
            <person name="Andrzejewski T.M."/>
            <person name="Davidsen T.M."/>
            <person name="Wayne K.J."/>
            <person name="Tettelin H."/>
            <person name="Glass J.I."/>
            <person name="Winkler M.E."/>
        </authorList>
    </citation>
    <scope>NUCLEOTIDE SEQUENCE [LARGE SCALE GENOMIC DNA]</scope>
    <source>
        <strain>D39 / NCTC 7466</strain>
    </source>
</reference>
<organism>
    <name type="scientific">Streptococcus pneumoniae serotype 2 (strain D39 / NCTC 7466)</name>
    <dbReference type="NCBI Taxonomy" id="373153"/>
    <lineage>
        <taxon>Bacteria</taxon>
        <taxon>Bacillati</taxon>
        <taxon>Bacillota</taxon>
        <taxon>Bacilli</taxon>
        <taxon>Lactobacillales</taxon>
        <taxon>Streptococcaceae</taxon>
        <taxon>Streptococcus</taxon>
    </lineage>
</organism>
<evidence type="ECO:0000255" key="1">
    <source>
        <dbReference type="HAMAP-Rule" id="MF_00149"/>
    </source>
</evidence>
<proteinExistence type="inferred from homology"/>
<feature type="chain" id="PRO_1000010090" description="DNA mismatch repair protein MutL">
    <location>
        <begin position="1"/>
        <end position="649"/>
    </location>
</feature>
<sequence>MSHIIELPEMLANQIAAGEVIERPASVVKELVENAIDAGSSQIIIEIEEAGLKKVQITDNGHGIAHDEVELALRRHATSKIKNQADLFRIRTLGFRGEALPSIASVSVLTLLTAVDGASHGTKLVARGGEVEEVIPATSPVGTKVCVEDLFFNTPARLKYMKSQQAELSHIIDIVNRLGLAHPEISFSLISDGKEMTRTAGTGQLRQAIAGIYGLVSAKKMIEIENSDLDFEISGFVSLPELTRANRNYISLFINGRYIKNFLLNRAILDGFGSKLMVGRFPLAVIHIHIDPYLADVNVHPTKQEVRISKEKELMTLVSEAIANSLKEQTLIPDALENLAKSTVRNREKVEQTILPLKENTLYYEKTEPSRPSQTEVADYQVELTDEGQDLTLFAKETLDRLTKPAKLHFAERKPANYDQLDHPELDLASIDKAYDKLEREEASSFPELEFFGQMHGTYLFAQGRDGLYIIDQHAAQERVKYEEYRESIGNVDQSQQQLLVPYIFEFPADDALRLKERMPLLEEVGVFLAEYGENQFILREHPIWMAEEEIESGIYEMCDMLLLTKEVSIKKYRAELAIMMSCKRSIKANHRIDDHSARQLLYQLSQCDNPYNCPHGRPVLVHFTKSDMEKMFRRIQENHTSLRELGKY</sequence>
<protein>
    <recommendedName>
        <fullName evidence="1">DNA mismatch repair protein MutL</fullName>
    </recommendedName>
</protein>
<accession>Q04MR4</accession>
<comment type="function">
    <text evidence="1">This protein is involved in the repair of mismatches in DNA. It is required for dam-dependent methyl-directed DNA mismatch repair. May act as a 'molecular matchmaker', a protein that promotes the formation of a stable complex between two or more DNA-binding proteins in an ATP-dependent manner without itself being part of a final effector complex.</text>
</comment>
<comment type="similarity">
    <text evidence="1">Belongs to the DNA mismatch repair MutL/HexB family.</text>
</comment>